<evidence type="ECO:0000255" key="1">
    <source>
        <dbReference type="HAMAP-Rule" id="MF_01898"/>
    </source>
</evidence>
<accession>P05652</accession>
<organism>
    <name type="scientific">Bacillus subtilis (strain 168)</name>
    <dbReference type="NCBI Taxonomy" id="224308"/>
    <lineage>
        <taxon>Bacteria</taxon>
        <taxon>Bacillati</taxon>
        <taxon>Bacillota</taxon>
        <taxon>Bacilli</taxon>
        <taxon>Bacillales</taxon>
        <taxon>Bacillaceae</taxon>
        <taxon>Bacillus</taxon>
    </lineage>
</organism>
<feature type="chain" id="PRO_0000145294" description="DNA gyrase subunit B">
    <location>
        <begin position="1"/>
        <end position="638"/>
    </location>
</feature>
<feature type="domain" description="Toprim" evidence="1">
    <location>
        <begin position="422"/>
        <end position="536"/>
    </location>
</feature>
<feature type="binding site" evidence="1">
    <location>
        <position position="428"/>
    </location>
    <ligand>
        <name>Mg(2+)</name>
        <dbReference type="ChEBI" id="CHEBI:18420"/>
        <label>1</label>
        <note>catalytic</note>
    </ligand>
</feature>
<feature type="binding site" evidence="1">
    <location>
        <position position="501"/>
    </location>
    <ligand>
        <name>Mg(2+)</name>
        <dbReference type="ChEBI" id="CHEBI:18420"/>
        <label>1</label>
        <note>catalytic</note>
    </ligand>
</feature>
<feature type="binding site" evidence="1">
    <location>
        <position position="501"/>
    </location>
    <ligand>
        <name>Mg(2+)</name>
        <dbReference type="ChEBI" id="CHEBI:18420"/>
        <label>2</label>
    </ligand>
</feature>
<feature type="binding site" evidence="1">
    <location>
        <position position="503"/>
    </location>
    <ligand>
        <name>Mg(2+)</name>
        <dbReference type="ChEBI" id="CHEBI:18420"/>
        <label>2</label>
    </ligand>
</feature>
<feature type="site" description="Interaction with DNA" evidence="1">
    <location>
        <position position="453"/>
    </location>
</feature>
<feature type="site" description="Interaction with DNA" evidence="1">
    <location>
        <position position="456"/>
    </location>
</feature>
<proteinExistence type="inferred from homology"/>
<name>GYRB_BACSU</name>
<protein>
    <recommendedName>
        <fullName evidence="1">DNA gyrase subunit B</fullName>
        <ecNumber evidence="1">5.6.2.2</ecNumber>
    </recommendedName>
</protein>
<keyword id="KW-0067">ATP-binding</keyword>
<keyword id="KW-0963">Cytoplasm</keyword>
<keyword id="KW-0238">DNA-binding</keyword>
<keyword id="KW-0413">Isomerase</keyword>
<keyword id="KW-0460">Magnesium</keyword>
<keyword id="KW-0479">Metal-binding</keyword>
<keyword id="KW-0547">Nucleotide-binding</keyword>
<keyword id="KW-1185">Reference proteome</keyword>
<keyword id="KW-0799">Topoisomerase</keyword>
<dbReference type="EC" id="5.6.2.2" evidence="1"/>
<dbReference type="EMBL" id="X02369">
    <property type="protein sequence ID" value="CAA26221.1"/>
    <property type="molecule type" value="Genomic_DNA"/>
</dbReference>
<dbReference type="EMBL" id="D26185">
    <property type="protein sequence ID" value="BAA05242.1"/>
    <property type="molecule type" value="Genomic_DNA"/>
</dbReference>
<dbReference type="EMBL" id="AL009126">
    <property type="protein sequence ID" value="CAB11782.1"/>
    <property type="molecule type" value="Genomic_DNA"/>
</dbReference>
<dbReference type="PIR" id="E22930">
    <property type="entry name" value="E22930"/>
</dbReference>
<dbReference type="RefSeq" id="NP_387887.1">
    <property type="nucleotide sequence ID" value="NC_000964.3"/>
</dbReference>
<dbReference type="RefSeq" id="WP_003226808.1">
    <property type="nucleotide sequence ID" value="NZ_OZ025638.1"/>
</dbReference>
<dbReference type="SMR" id="P05652"/>
<dbReference type="FunCoup" id="P05652">
    <property type="interactions" value="477"/>
</dbReference>
<dbReference type="STRING" id="224308.BSU00060"/>
<dbReference type="BindingDB" id="P05652"/>
<dbReference type="jPOST" id="P05652"/>
<dbReference type="PaxDb" id="224308-BSU00060"/>
<dbReference type="EnsemblBacteria" id="CAB11782">
    <property type="protein sequence ID" value="CAB11782"/>
    <property type="gene ID" value="BSU_00060"/>
</dbReference>
<dbReference type="GeneID" id="939456"/>
<dbReference type="KEGG" id="bsu:BSU00060"/>
<dbReference type="PATRIC" id="fig|224308.179.peg.6"/>
<dbReference type="eggNOG" id="COG0187">
    <property type="taxonomic scope" value="Bacteria"/>
</dbReference>
<dbReference type="InParanoid" id="P05652"/>
<dbReference type="OrthoDB" id="9802808at2"/>
<dbReference type="PhylomeDB" id="P05652"/>
<dbReference type="BioCyc" id="BSUB:BSU00060-MONOMER"/>
<dbReference type="Proteomes" id="UP000001570">
    <property type="component" value="Chromosome"/>
</dbReference>
<dbReference type="GO" id="GO:0005694">
    <property type="term" value="C:chromosome"/>
    <property type="evidence" value="ECO:0007669"/>
    <property type="project" value="InterPro"/>
</dbReference>
<dbReference type="GO" id="GO:0005737">
    <property type="term" value="C:cytoplasm"/>
    <property type="evidence" value="ECO:0007669"/>
    <property type="project" value="UniProtKB-SubCell"/>
</dbReference>
<dbReference type="GO" id="GO:0005524">
    <property type="term" value="F:ATP binding"/>
    <property type="evidence" value="ECO:0007669"/>
    <property type="project" value="UniProtKB-UniRule"/>
</dbReference>
<dbReference type="GO" id="GO:0003677">
    <property type="term" value="F:DNA binding"/>
    <property type="evidence" value="ECO:0007669"/>
    <property type="project" value="UniProtKB-KW"/>
</dbReference>
<dbReference type="GO" id="GO:0034335">
    <property type="term" value="F:DNA negative supercoiling activity"/>
    <property type="evidence" value="ECO:0007669"/>
    <property type="project" value="UniProtKB-ARBA"/>
</dbReference>
<dbReference type="GO" id="GO:0046872">
    <property type="term" value="F:metal ion binding"/>
    <property type="evidence" value="ECO:0007669"/>
    <property type="project" value="UniProtKB-KW"/>
</dbReference>
<dbReference type="GO" id="GO:0006265">
    <property type="term" value="P:DNA topological change"/>
    <property type="evidence" value="ECO:0007669"/>
    <property type="project" value="UniProtKB-UniRule"/>
</dbReference>
<dbReference type="GO" id="GO:0006261">
    <property type="term" value="P:DNA-templated DNA replication"/>
    <property type="evidence" value="ECO:0007669"/>
    <property type="project" value="UniProtKB-UniRule"/>
</dbReference>
<dbReference type="CDD" id="cd16928">
    <property type="entry name" value="HATPase_GyrB-like"/>
    <property type="match status" value="1"/>
</dbReference>
<dbReference type="CDD" id="cd00822">
    <property type="entry name" value="TopoII_Trans_DNA_gyrase"/>
    <property type="match status" value="1"/>
</dbReference>
<dbReference type="CDD" id="cd03366">
    <property type="entry name" value="TOPRIM_TopoIIA_GyrB"/>
    <property type="match status" value="1"/>
</dbReference>
<dbReference type="FunFam" id="3.30.230.10:FF:000005">
    <property type="entry name" value="DNA gyrase subunit B"/>
    <property type="match status" value="1"/>
</dbReference>
<dbReference type="FunFam" id="3.30.565.10:FF:000002">
    <property type="entry name" value="DNA gyrase subunit B"/>
    <property type="match status" value="1"/>
</dbReference>
<dbReference type="FunFam" id="3.40.50.670:FF:000002">
    <property type="entry name" value="DNA gyrase subunit B"/>
    <property type="match status" value="1"/>
</dbReference>
<dbReference type="Gene3D" id="3.30.230.10">
    <property type="match status" value="1"/>
</dbReference>
<dbReference type="Gene3D" id="3.40.50.670">
    <property type="match status" value="1"/>
</dbReference>
<dbReference type="Gene3D" id="3.30.565.10">
    <property type="entry name" value="Histidine kinase-like ATPase, C-terminal domain"/>
    <property type="match status" value="1"/>
</dbReference>
<dbReference type="HAMAP" id="MF_01898">
    <property type="entry name" value="GyrB"/>
    <property type="match status" value="1"/>
</dbReference>
<dbReference type="InterPro" id="IPR002288">
    <property type="entry name" value="DNA_gyrase_B_C"/>
</dbReference>
<dbReference type="InterPro" id="IPR011557">
    <property type="entry name" value="GyrB"/>
</dbReference>
<dbReference type="InterPro" id="IPR036890">
    <property type="entry name" value="HATPase_C_sf"/>
</dbReference>
<dbReference type="InterPro" id="IPR020568">
    <property type="entry name" value="Ribosomal_Su5_D2-typ_SF"/>
</dbReference>
<dbReference type="InterPro" id="IPR014721">
    <property type="entry name" value="Ribsml_uS5_D2-typ_fold_subgr"/>
</dbReference>
<dbReference type="InterPro" id="IPR001241">
    <property type="entry name" value="Topo_IIA"/>
</dbReference>
<dbReference type="InterPro" id="IPR013760">
    <property type="entry name" value="Topo_IIA-like_dom_sf"/>
</dbReference>
<dbReference type="InterPro" id="IPR000565">
    <property type="entry name" value="Topo_IIA_B"/>
</dbReference>
<dbReference type="InterPro" id="IPR013759">
    <property type="entry name" value="Topo_IIA_B_C"/>
</dbReference>
<dbReference type="InterPro" id="IPR013506">
    <property type="entry name" value="Topo_IIA_bsu_dom2"/>
</dbReference>
<dbReference type="InterPro" id="IPR018522">
    <property type="entry name" value="TopoIIA_CS"/>
</dbReference>
<dbReference type="InterPro" id="IPR006171">
    <property type="entry name" value="TOPRIM_dom"/>
</dbReference>
<dbReference type="InterPro" id="IPR034160">
    <property type="entry name" value="TOPRIM_GyrB"/>
</dbReference>
<dbReference type="NCBIfam" id="TIGR01059">
    <property type="entry name" value="gyrB"/>
    <property type="match status" value="1"/>
</dbReference>
<dbReference type="NCBIfam" id="NF004189">
    <property type="entry name" value="PRK05644.1"/>
    <property type="match status" value="1"/>
</dbReference>
<dbReference type="NCBIfam" id="NF011501">
    <property type="entry name" value="PRK14939.1"/>
    <property type="match status" value="1"/>
</dbReference>
<dbReference type="PANTHER" id="PTHR45866:SF1">
    <property type="entry name" value="DNA GYRASE SUBUNIT B, MITOCHONDRIAL"/>
    <property type="match status" value="1"/>
</dbReference>
<dbReference type="PANTHER" id="PTHR45866">
    <property type="entry name" value="DNA GYRASE/TOPOISOMERASE SUBUNIT B"/>
    <property type="match status" value="1"/>
</dbReference>
<dbReference type="Pfam" id="PF00204">
    <property type="entry name" value="DNA_gyraseB"/>
    <property type="match status" value="1"/>
</dbReference>
<dbReference type="Pfam" id="PF00986">
    <property type="entry name" value="DNA_gyraseB_C"/>
    <property type="match status" value="1"/>
</dbReference>
<dbReference type="Pfam" id="PF02518">
    <property type="entry name" value="HATPase_c"/>
    <property type="match status" value="1"/>
</dbReference>
<dbReference type="Pfam" id="PF01751">
    <property type="entry name" value="Toprim"/>
    <property type="match status" value="1"/>
</dbReference>
<dbReference type="PRINTS" id="PR01159">
    <property type="entry name" value="DNAGYRASEB"/>
</dbReference>
<dbReference type="PRINTS" id="PR00418">
    <property type="entry name" value="TPI2FAMILY"/>
</dbReference>
<dbReference type="SMART" id="SM00387">
    <property type="entry name" value="HATPase_c"/>
    <property type="match status" value="1"/>
</dbReference>
<dbReference type="SMART" id="SM00433">
    <property type="entry name" value="TOP2c"/>
    <property type="match status" value="1"/>
</dbReference>
<dbReference type="SUPFAM" id="SSF55874">
    <property type="entry name" value="ATPase domain of HSP90 chaperone/DNA topoisomerase II/histidine kinase"/>
    <property type="match status" value="1"/>
</dbReference>
<dbReference type="SUPFAM" id="SSF54211">
    <property type="entry name" value="Ribosomal protein S5 domain 2-like"/>
    <property type="match status" value="1"/>
</dbReference>
<dbReference type="SUPFAM" id="SSF56719">
    <property type="entry name" value="Type II DNA topoisomerase"/>
    <property type="match status" value="1"/>
</dbReference>
<dbReference type="PROSITE" id="PS00177">
    <property type="entry name" value="TOPOISOMERASE_II"/>
    <property type="match status" value="1"/>
</dbReference>
<dbReference type="PROSITE" id="PS50880">
    <property type="entry name" value="TOPRIM"/>
    <property type="match status" value="1"/>
</dbReference>
<sequence>MEQQQNSYDENQIQVLEGLEAVRKRPGMYIGSTNSKGLHHLVWEIVDNSIDEALAGYCTDINIQIEKDNSITVVDNGRGIPVGIHEKMGRPAVEVIMTVLHAGGKFDGSGYKVSGGLHGVGASVVNALSTELDVTVHRDGKIHRQTYKRGVPVTDLEIIGETDHTGTTTHFVPDPEIFSETTEYDYDLLANRVRELAFLTKGVNITIEDKREGQERKNEYHYEGGIKSYVEYLNRSKEVVHEEPIYIEGEKDGITVEVALQYNDSYTSNIYSFTNNINTYEGGTHEAGFKTGLTRVINDYARKKGLIKENDPNLSGDDVREGLTAIISIKHPDPQFEGQTKTKLGNSEARTITDTLFSTAMETFMLENPDAAKKIVDKGLMAARARMAAKKARELTRRKSALEISNLPGKLADCSSKDPSISELYIVEGDSAGGSAKQGRDRHFQAILPLRGKILNVEKARLDKILSNNEVRSMITALGTGIGEDFNLEKARYHKVVIMTDADVDGAHIRTLLLTFFYRYMRQIIENGYVYIAQPPLYKVQQGKRVEYAYNDKELEELLKTLPQTPKPGLQRYKGLGEMNATQLWETTMDPSSRTLLQVTLEDAMDADETFEMLMGDKVEPRRNFIEANARYVKNLDI</sequence>
<gene>
    <name evidence="1" type="primary">gyrB</name>
    <name type="synonym">novA</name>
    <name type="ordered locus">BSU00060</name>
</gene>
<reference key="1">
    <citation type="journal article" date="1985" name="Nucleic Acids Res.">
        <title>Structure and function of the region of the replication origin of the Bacillus subtilis chromosome. III. Nucleotide sequence of some 10,000 base pairs in the origin region.</title>
        <authorList>
            <person name="Moriya S."/>
            <person name="Ogasawara N."/>
            <person name="Yoshikawa H."/>
        </authorList>
    </citation>
    <scope>NUCLEOTIDE SEQUENCE [GENOMIC DNA]</scope>
</reference>
<reference key="2">
    <citation type="journal article" date="1994" name="DNA Res.">
        <title>Systematic sequencing of the 180 kilobase region of the Bacillus subtilis chromosome containing the replication origin.</title>
        <authorList>
            <person name="Ogasawara N."/>
            <person name="Nakai S."/>
            <person name="Yoshikawa H."/>
        </authorList>
    </citation>
    <scope>NUCLEOTIDE SEQUENCE [GENOMIC DNA]</scope>
    <source>
        <strain>168</strain>
    </source>
</reference>
<reference key="3">
    <citation type="journal article" date="1997" name="Nature">
        <title>The complete genome sequence of the Gram-positive bacterium Bacillus subtilis.</title>
        <authorList>
            <person name="Kunst F."/>
            <person name="Ogasawara N."/>
            <person name="Moszer I."/>
            <person name="Albertini A.M."/>
            <person name="Alloni G."/>
            <person name="Azevedo V."/>
            <person name="Bertero M.G."/>
            <person name="Bessieres P."/>
            <person name="Bolotin A."/>
            <person name="Borchert S."/>
            <person name="Borriss R."/>
            <person name="Boursier L."/>
            <person name="Brans A."/>
            <person name="Braun M."/>
            <person name="Brignell S.C."/>
            <person name="Bron S."/>
            <person name="Brouillet S."/>
            <person name="Bruschi C.V."/>
            <person name="Caldwell B."/>
            <person name="Capuano V."/>
            <person name="Carter N.M."/>
            <person name="Choi S.-K."/>
            <person name="Codani J.-J."/>
            <person name="Connerton I.F."/>
            <person name="Cummings N.J."/>
            <person name="Daniel R.A."/>
            <person name="Denizot F."/>
            <person name="Devine K.M."/>
            <person name="Duesterhoeft A."/>
            <person name="Ehrlich S.D."/>
            <person name="Emmerson P.T."/>
            <person name="Entian K.-D."/>
            <person name="Errington J."/>
            <person name="Fabret C."/>
            <person name="Ferrari E."/>
            <person name="Foulger D."/>
            <person name="Fritz C."/>
            <person name="Fujita M."/>
            <person name="Fujita Y."/>
            <person name="Fuma S."/>
            <person name="Galizzi A."/>
            <person name="Galleron N."/>
            <person name="Ghim S.-Y."/>
            <person name="Glaser P."/>
            <person name="Goffeau A."/>
            <person name="Golightly E.J."/>
            <person name="Grandi G."/>
            <person name="Guiseppi G."/>
            <person name="Guy B.J."/>
            <person name="Haga K."/>
            <person name="Haiech J."/>
            <person name="Harwood C.R."/>
            <person name="Henaut A."/>
            <person name="Hilbert H."/>
            <person name="Holsappel S."/>
            <person name="Hosono S."/>
            <person name="Hullo M.-F."/>
            <person name="Itaya M."/>
            <person name="Jones L.-M."/>
            <person name="Joris B."/>
            <person name="Karamata D."/>
            <person name="Kasahara Y."/>
            <person name="Klaerr-Blanchard M."/>
            <person name="Klein C."/>
            <person name="Kobayashi Y."/>
            <person name="Koetter P."/>
            <person name="Koningstein G."/>
            <person name="Krogh S."/>
            <person name="Kumano M."/>
            <person name="Kurita K."/>
            <person name="Lapidus A."/>
            <person name="Lardinois S."/>
            <person name="Lauber J."/>
            <person name="Lazarevic V."/>
            <person name="Lee S.-M."/>
            <person name="Levine A."/>
            <person name="Liu H."/>
            <person name="Masuda S."/>
            <person name="Mauel C."/>
            <person name="Medigue C."/>
            <person name="Medina N."/>
            <person name="Mellado R.P."/>
            <person name="Mizuno M."/>
            <person name="Moestl D."/>
            <person name="Nakai S."/>
            <person name="Noback M."/>
            <person name="Noone D."/>
            <person name="O'Reilly M."/>
            <person name="Ogawa K."/>
            <person name="Ogiwara A."/>
            <person name="Oudega B."/>
            <person name="Park S.-H."/>
            <person name="Parro V."/>
            <person name="Pohl T.M."/>
            <person name="Portetelle D."/>
            <person name="Porwollik S."/>
            <person name="Prescott A.M."/>
            <person name="Presecan E."/>
            <person name="Pujic P."/>
            <person name="Purnelle B."/>
            <person name="Rapoport G."/>
            <person name="Rey M."/>
            <person name="Reynolds S."/>
            <person name="Rieger M."/>
            <person name="Rivolta C."/>
            <person name="Rocha E."/>
            <person name="Roche B."/>
            <person name="Rose M."/>
            <person name="Sadaie Y."/>
            <person name="Sato T."/>
            <person name="Scanlan E."/>
            <person name="Schleich S."/>
            <person name="Schroeter R."/>
            <person name="Scoffone F."/>
            <person name="Sekiguchi J."/>
            <person name="Sekowska A."/>
            <person name="Seror S.J."/>
            <person name="Serror P."/>
            <person name="Shin B.-S."/>
            <person name="Soldo B."/>
            <person name="Sorokin A."/>
            <person name="Tacconi E."/>
            <person name="Takagi T."/>
            <person name="Takahashi H."/>
            <person name="Takemaru K."/>
            <person name="Takeuchi M."/>
            <person name="Tamakoshi A."/>
            <person name="Tanaka T."/>
            <person name="Terpstra P."/>
            <person name="Tognoni A."/>
            <person name="Tosato V."/>
            <person name="Uchiyama S."/>
            <person name="Vandenbol M."/>
            <person name="Vannier F."/>
            <person name="Vassarotti A."/>
            <person name="Viari A."/>
            <person name="Wambutt R."/>
            <person name="Wedler E."/>
            <person name="Wedler H."/>
            <person name="Weitzenegger T."/>
            <person name="Winters P."/>
            <person name="Wipat A."/>
            <person name="Yamamoto H."/>
            <person name="Yamane K."/>
            <person name="Yasumoto K."/>
            <person name="Yata K."/>
            <person name="Yoshida K."/>
            <person name="Yoshikawa H.-F."/>
            <person name="Zumstein E."/>
            <person name="Yoshikawa H."/>
            <person name="Danchin A."/>
        </authorList>
    </citation>
    <scope>NUCLEOTIDE SEQUENCE [LARGE SCALE GENOMIC DNA]</scope>
    <source>
        <strain>168</strain>
    </source>
</reference>
<comment type="function">
    <text evidence="1">A type II topoisomerase that negatively supercoils closed circular double-stranded (ds) DNA in an ATP-dependent manner to modulate DNA topology and maintain chromosomes in an underwound state. Negative supercoiling favors strand separation, and DNA replication, transcription, recombination and repair, all of which involve strand separation. Also able to catalyze the interconversion of other topological isomers of dsDNA rings, including catenanes and knotted rings. Type II topoisomerases break and join 2 DNA strands simultaneously in an ATP-dependent manner.</text>
</comment>
<comment type="catalytic activity">
    <reaction evidence="1">
        <text>ATP-dependent breakage, passage and rejoining of double-stranded DNA.</text>
        <dbReference type="EC" id="5.6.2.2"/>
    </reaction>
</comment>
<comment type="cofactor">
    <cofactor evidence="1">
        <name>Mg(2+)</name>
        <dbReference type="ChEBI" id="CHEBI:18420"/>
    </cofactor>
    <cofactor evidence="1">
        <name>Mn(2+)</name>
        <dbReference type="ChEBI" id="CHEBI:29035"/>
    </cofactor>
    <cofactor evidence="1">
        <name>Ca(2+)</name>
        <dbReference type="ChEBI" id="CHEBI:29108"/>
    </cofactor>
    <text evidence="1">Binds two Mg(2+) per subunit. The magnesium ions form salt bridges with both the protein and the DNA. Can also accept other divalent metal cations, such as Mn(2+) or Ca(2+).</text>
</comment>
<comment type="subunit">
    <text evidence="1">Heterotetramer, composed of two GyrA and two GyrB chains. In the heterotetramer, GyrA contains the active site tyrosine that forms a transient covalent intermediate with DNA, while GyrB binds cofactors and catalyzes ATP hydrolysis.</text>
</comment>
<comment type="subcellular location">
    <subcellularLocation>
        <location evidence="1">Cytoplasm</location>
    </subcellularLocation>
</comment>
<comment type="miscellaneous">
    <text evidence="1">Few gyrases are as efficient as E.coli at forming negative supercoils. Not all organisms have 2 type II topoisomerases; in organisms with a single type II topoisomerase this enzyme also has to decatenate newly replicated chromosomes.</text>
</comment>
<comment type="similarity">
    <text evidence="1">Belongs to the type II topoisomerase GyrB family.</text>
</comment>